<evidence type="ECO:0000250" key="1"/>
<evidence type="ECO:0000255" key="2">
    <source>
        <dbReference type="PROSITE-ProRule" id="PRU00783"/>
    </source>
</evidence>
<evidence type="ECO:0000269" key="3">
    <source>
    </source>
</evidence>
<evidence type="ECO:0000269" key="4">
    <source>
    </source>
</evidence>
<evidence type="ECO:0000305" key="5"/>
<proteinExistence type="evidence at protein level"/>
<comment type="function">
    <text evidence="3 4">Phosphorylates the second messenger diacylglycerol (DAG) to generate phosphatidic acid (PA), another important signaling molecule. PA is required for plant development and responses to abiotic stress and pathogen attack. May be involved in the accumulation of PA during cold stress xhibits high specificity for 1,2-dioleoyl-sn-glycerol (1,2-DOG), 1-palmitoyl, 2-oleoyl-sn-glycerol (1,2 POG), 1-stearoyl, 2-linoleoyl-sn-glycerol (1,2-SLG) and 1-oleoyl, 2-palmitoyl-sn-glycerol (1,2-OPG).</text>
</comment>
<comment type="catalytic activity">
    <reaction evidence="3">
        <text>a 1,2-diacyl-sn-glycerol + ATP = a 1,2-diacyl-sn-glycero-3-phosphate + ADP + H(+)</text>
        <dbReference type="Rhea" id="RHEA:10272"/>
        <dbReference type="ChEBI" id="CHEBI:15378"/>
        <dbReference type="ChEBI" id="CHEBI:17815"/>
        <dbReference type="ChEBI" id="CHEBI:30616"/>
        <dbReference type="ChEBI" id="CHEBI:58608"/>
        <dbReference type="ChEBI" id="CHEBI:456216"/>
        <dbReference type="EC" id="2.7.1.107"/>
    </reaction>
</comment>
<comment type="biophysicochemical properties">
    <kinetics>
        <KM evidence="3">0.74 mM for ATP</KM>
        <Vmax evidence="3">0.34 pmol/min/ug enzyme toward 1,2-dioleoyl-sn-glycerol</Vmax>
    </kinetics>
    <phDependence>
        <text evidence="3">Optimum pH is 6.8.</text>
    </phDependence>
</comment>
<comment type="subunit">
    <text evidence="1">Monomer.</text>
</comment>
<comment type="tissue specificity">
    <text evidence="3">Highly expressed in flowers, and at low levels in roots, stems and leaves.</text>
</comment>
<comment type="similarity">
    <text evidence="5">Belongs to the eukaryotic diacylglycerol kinase family.</text>
</comment>
<comment type="sequence caution" evidence="5">
    <conflict type="miscellaneous discrepancy">
        <sequence resource="EMBL-CDS" id="AAK25884"/>
    </conflict>
    <text>Intron retention.</text>
</comment>
<comment type="sequence caution" evidence="5">
    <conflict type="miscellaneous discrepancy">
        <sequence resource="EMBL-CDS" id="AAM44963"/>
    </conflict>
    <text>Intron retention.</text>
</comment>
<comment type="sequence caution" evidence="5">
    <conflict type="miscellaneous discrepancy">
        <sequence resource="EMBL-CDS" id="AAU04880"/>
    </conflict>
    <text>Intron retention.</text>
</comment>
<comment type="sequence caution" evidence="5">
    <conflict type="erroneous gene model prediction">
        <sequence resource="EMBL-CDS" id="CAB81027"/>
    </conflict>
</comment>
<protein>
    <recommendedName>
        <fullName>Diacylglycerol kinase 7</fullName>
        <shortName>AtDGK7</shortName>
        <shortName>DAG kinase 7</shortName>
        <ecNumber>2.7.1.107</ecNumber>
    </recommendedName>
    <alternativeName>
        <fullName>Diglyceride kinase 7</fullName>
        <shortName>DGK 7</shortName>
    </alternativeName>
</protein>
<gene>
    <name type="primary">DGK7</name>
    <name type="ordered locus">At4g30340</name>
    <name type="ORF">F17I23.320</name>
</gene>
<organism>
    <name type="scientific">Arabidopsis thaliana</name>
    <name type="common">Mouse-ear cress</name>
    <dbReference type="NCBI Taxonomy" id="3702"/>
    <lineage>
        <taxon>Eukaryota</taxon>
        <taxon>Viridiplantae</taxon>
        <taxon>Streptophyta</taxon>
        <taxon>Embryophyta</taxon>
        <taxon>Tracheophyta</taxon>
        <taxon>Spermatophyta</taxon>
        <taxon>Magnoliopsida</taxon>
        <taxon>eudicotyledons</taxon>
        <taxon>Gunneridae</taxon>
        <taxon>Pentapetalae</taxon>
        <taxon>rosids</taxon>
        <taxon>malvids</taxon>
        <taxon>Brassicales</taxon>
        <taxon>Brassicaceae</taxon>
        <taxon>Camelineae</taxon>
        <taxon>Arabidopsis</taxon>
    </lineage>
</organism>
<feature type="chain" id="PRO_0000422115" description="Diacylglycerol kinase 7">
    <location>
        <begin position="1"/>
        <end position="492"/>
    </location>
</feature>
<feature type="domain" description="DAGKc" evidence="2">
    <location>
        <begin position="90"/>
        <end position="248"/>
    </location>
</feature>
<feature type="sequence conflict" description="In Ref. 1; ABC71078." evidence="5" ref="1">
    <original>D</original>
    <variation>G</variation>
    <location>
        <position position="274"/>
    </location>
</feature>
<sequence length="492" mass="54572">MEETPRSVGEASTTNFVAARPSAKTDDAVTMRGCGFANLALVGIDKEELRGRLAMPEYLRIAMRDCIKRKDSTEISDHLLLPGGAAADMAPHAPMVVFINPKSGGRHGPVLKERLQQLMTEEQVFDLTEVKPHEFVRYGLGCLDTLAAKGDECARECREKIRIMVAGGDGTVGWVLGCLGELHKDGKSHIPPVGVIPLGTGNDLSRSFSWGGSFPFAWRSAMKRTLHRATLGSIARLDSWKIVVSMPSGEVVDPPYSLKPTIEETALDQALDADGDVPPKAKSYEGVFYNYFSIGMDAQVAYGFHHLRNEKPYLAQGPVTNKIIYSSYSCTQGWFCTPCVNNPALRGLRNIMKIHIKKANCSEWEEIHVPKSVRSIVVLNLYNYGSGRHPWGNLRPKYLEKRGFVEAHCDDGLIEIFGLKQGWHASFVMAEIISAKHIAQAAAIRFELRGGDWKNAFLQMDGEPWKQPMKSDYSTFVEIKKVPFQSLMINGE</sequence>
<name>DGK7_ARATH</name>
<keyword id="KW-0067">ATP-binding</keyword>
<keyword id="KW-0418">Kinase</keyword>
<keyword id="KW-0547">Nucleotide-binding</keyword>
<keyword id="KW-0611">Plant defense</keyword>
<keyword id="KW-1185">Reference proteome</keyword>
<keyword id="KW-0346">Stress response</keyword>
<keyword id="KW-0808">Transferase</keyword>
<reference key="1">
    <citation type="journal article" date="2005" name="J. Biol. Chem.">
        <title>Arabidopsis AtDGK7, the smallest member of plant diacylglycerol kinases (DGKs), displays unique biochemical features and saturates at low substrate concentration: the DGK inhibitor R59022 differentially affects AtDGK2 and AtDGK7 activity in vitro and alters plant growth and development.</title>
        <authorList>
            <person name="Gomez-Merino F.C."/>
            <person name="Arana-Ceballos F.A."/>
            <person name="Trejo-Tellez L.I."/>
            <person name="Skirycz A."/>
            <person name="Brearley C.A."/>
            <person name="Doermann P."/>
            <person name="Mueller-Roeber B."/>
        </authorList>
    </citation>
    <scope>NUCLEOTIDE SEQUENCE [MRNA]</scope>
    <scope>FUNCTION</scope>
    <scope>CATALYTIC ACTIVITY</scope>
    <scope>BIOPHYSICOCHEMICAL PROPERTIES</scope>
    <scope>TISSUE SPECIFICITY</scope>
</reference>
<reference key="2">
    <citation type="submission" date="2008-02" db="EMBL/GenBank/DDBJ databases">
        <title>Arabidopsis AtDGK7 regulates lateral root formation.</title>
        <authorList>
            <person name="Arana-Ceballos F.A."/>
            <person name="Gomez-Merino F."/>
            <person name="Krebs J."/>
            <person name="Skirycz A."/>
            <person name="Mueller-Roeber B."/>
        </authorList>
    </citation>
    <scope>NUCLEOTIDE SEQUENCE [MRNA]</scope>
    <source>
        <strain>cv. Columbia</strain>
    </source>
</reference>
<reference key="3">
    <citation type="journal article" date="1999" name="Nature">
        <title>Sequence and analysis of chromosome 4 of the plant Arabidopsis thaliana.</title>
        <authorList>
            <person name="Mayer K.F.X."/>
            <person name="Schueller C."/>
            <person name="Wambutt R."/>
            <person name="Murphy G."/>
            <person name="Volckaert G."/>
            <person name="Pohl T."/>
            <person name="Duesterhoeft A."/>
            <person name="Stiekema W."/>
            <person name="Entian K.-D."/>
            <person name="Terryn N."/>
            <person name="Harris B."/>
            <person name="Ansorge W."/>
            <person name="Brandt P."/>
            <person name="Grivell L.A."/>
            <person name="Rieger M."/>
            <person name="Weichselgartner M."/>
            <person name="de Simone V."/>
            <person name="Obermaier B."/>
            <person name="Mache R."/>
            <person name="Mueller M."/>
            <person name="Kreis M."/>
            <person name="Delseny M."/>
            <person name="Puigdomenech P."/>
            <person name="Watson M."/>
            <person name="Schmidtheini T."/>
            <person name="Reichert B."/>
            <person name="Portetelle D."/>
            <person name="Perez-Alonso M."/>
            <person name="Boutry M."/>
            <person name="Bancroft I."/>
            <person name="Vos P."/>
            <person name="Hoheisel J."/>
            <person name="Zimmermann W."/>
            <person name="Wedler H."/>
            <person name="Ridley P."/>
            <person name="Langham S.-A."/>
            <person name="McCullagh B."/>
            <person name="Bilham L."/>
            <person name="Robben J."/>
            <person name="van der Schueren J."/>
            <person name="Grymonprez B."/>
            <person name="Chuang Y.-J."/>
            <person name="Vandenbussche F."/>
            <person name="Braeken M."/>
            <person name="Weltjens I."/>
            <person name="Voet M."/>
            <person name="Bastiaens I."/>
            <person name="Aert R."/>
            <person name="Defoor E."/>
            <person name="Weitzenegger T."/>
            <person name="Bothe G."/>
            <person name="Ramsperger U."/>
            <person name="Hilbert H."/>
            <person name="Braun M."/>
            <person name="Holzer E."/>
            <person name="Brandt A."/>
            <person name="Peters S."/>
            <person name="van Staveren M."/>
            <person name="Dirkse W."/>
            <person name="Mooijman P."/>
            <person name="Klein Lankhorst R."/>
            <person name="Rose M."/>
            <person name="Hauf J."/>
            <person name="Koetter P."/>
            <person name="Berneiser S."/>
            <person name="Hempel S."/>
            <person name="Feldpausch M."/>
            <person name="Lamberth S."/>
            <person name="Van den Daele H."/>
            <person name="De Keyser A."/>
            <person name="Buysshaert C."/>
            <person name="Gielen J."/>
            <person name="Villarroel R."/>
            <person name="De Clercq R."/>
            <person name="van Montagu M."/>
            <person name="Rogers J."/>
            <person name="Cronin A."/>
            <person name="Quail M.A."/>
            <person name="Bray-Allen S."/>
            <person name="Clark L."/>
            <person name="Doggett J."/>
            <person name="Hall S."/>
            <person name="Kay M."/>
            <person name="Lennard N."/>
            <person name="McLay K."/>
            <person name="Mayes R."/>
            <person name="Pettett A."/>
            <person name="Rajandream M.A."/>
            <person name="Lyne M."/>
            <person name="Benes V."/>
            <person name="Rechmann S."/>
            <person name="Borkova D."/>
            <person name="Bloecker H."/>
            <person name="Scharfe M."/>
            <person name="Grimm M."/>
            <person name="Loehnert T.-H."/>
            <person name="Dose S."/>
            <person name="de Haan M."/>
            <person name="Maarse A.C."/>
            <person name="Schaefer M."/>
            <person name="Mueller-Auer S."/>
            <person name="Gabel C."/>
            <person name="Fuchs M."/>
            <person name="Fartmann B."/>
            <person name="Granderath K."/>
            <person name="Dauner D."/>
            <person name="Herzl A."/>
            <person name="Neumann S."/>
            <person name="Argiriou A."/>
            <person name="Vitale D."/>
            <person name="Liguori R."/>
            <person name="Piravandi E."/>
            <person name="Massenet O."/>
            <person name="Quigley F."/>
            <person name="Clabauld G."/>
            <person name="Muendlein A."/>
            <person name="Felber R."/>
            <person name="Schnabl S."/>
            <person name="Hiller R."/>
            <person name="Schmidt W."/>
            <person name="Lecharny A."/>
            <person name="Aubourg S."/>
            <person name="Chefdor F."/>
            <person name="Cooke R."/>
            <person name="Berger C."/>
            <person name="Monfort A."/>
            <person name="Casacuberta E."/>
            <person name="Gibbons T."/>
            <person name="Weber N."/>
            <person name="Vandenbol M."/>
            <person name="Bargues M."/>
            <person name="Terol J."/>
            <person name="Torres A."/>
            <person name="Perez-Perez A."/>
            <person name="Purnelle B."/>
            <person name="Bent E."/>
            <person name="Johnson S."/>
            <person name="Tacon D."/>
            <person name="Jesse T."/>
            <person name="Heijnen L."/>
            <person name="Schwarz S."/>
            <person name="Scholler P."/>
            <person name="Heber S."/>
            <person name="Francs P."/>
            <person name="Bielke C."/>
            <person name="Frishman D."/>
            <person name="Haase D."/>
            <person name="Lemcke K."/>
            <person name="Mewes H.-W."/>
            <person name="Stocker S."/>
            <person name="Zaccaria P."/>
            <person name="Bevan M."/>
            <person name="Wilson R.K."/>
            <person name="de la Bastide M."/>
            <person name="Habermann K."/>
            <person name="Parnell L."/>
            <person name="Dedhia N."/>
            <person name="Gnoj L."/>
            <person name="Schutz K."/>
            <person name="Huang E."/>
            <person name="Spiegel L."/>
            <person name="Sekhon M."/>
            <person name="Murray J."/>
            <person name="Sheet P."/>
            <person name="Cordes M."/>
            <person name="Abu-Threideh J."/>
            <person name="Stoneking T."/>
            <person name="Kalicki J."/>
            <person name="Graves T."/>
            <person name="Harmon G."/>
            <person name="Edwards J."/>
            <person name="Latreille P."/>
            <person name="Courtney L."/>
            <person name="Cloud J."/>
            <person name="Abbott A."/>
            <person name="Scott K."/>
            <person name="Johnson D."/>
            <person name="Minx P."/>
            <person name="Bentley D."/>
            <person name="Fulton B."/>
            <person name="Miller N."/>
            <person name="Greco T."/>
            <person name="Kemp K."/>
            <person name="Kramer J."/>
            <person name="Fulton L."/>
            <person name="Mardis E."/>
            <person name="Dante M."/>
            <person name="Pepin K."/>
            <person name="Hillier L.W."/>
            <person name="Nelson J."/>
            <person name="Spieth J."/>
            <person name="Ryan E."/>
            <person name="Andrews S."/>
            <person name="Geisel C."/>
            <person name="Layman D."/>
            <person name="Du H."/>
            <person name="Ali J."/>
            <person name="Berghoff A."/>
            <person name="Jones K."/>
            <person name="Drone K."/>
            <person name="Cotton M."/>
            <person name="Joshu C."/>
            <person name="Antonoiu B."/>
            <person name="Zidanic M."/>
            <person name="Strong C."/>
            <person name="Sun H."/>
            <person name="Lamar B."/>
            <person name="Yordan C."/>
            <person name="Ma P."/>
            <person name="Zhong J."/>
            <person name="Preston R."/>
            <person name="Vil D."/>
            <person name="Shekher M."/>
            <person name="Matero A."/>
            <person name="Shah R."/>
            <person name="Swaby I.K."/>
            <person name="O'Shaughnessy A."/>
            <person name="Rodriguez M."/>
            <person name="Hoffman J."/>
            <person name="Till S."/>
            <person name="Granat S."/>
            <person name="Shohdy N."/>
            <person name="Hasegawa A."/>
            <person name="Hameed A."/>
            <person name="Lodhi M."/>
            <person name="Johnson A."/>
            <person name="Chen E."/>
            <person name="Marra M.A."/>
            <person name="Martienssen R."/>
            <person name="McCombie W.R."/>
        </authorList>
    </citation>
    <scope>NUCLEOTIDE SEQUENCE [LARGE SCALE GENOMIC DNA]</scope>
    <source>
        <strain>cv. Columbia</strain>
    </source>
</reference>
<reference key="4">
    <citation type="journal article" date="2017" name="Plant J.">
        <title>Araport11: a complete reannotation of the Arabidopsis thaliana reference genome.</title>
        <authorList>
            <person name="Cheng C.Y."/>
            <person name="Krishnakumar V."/>
            <person name="Chan A.P."/>
            <person name="Thibaud-Nissen F."/>
            <person name="Schobel S."/>
            <person name="Town C.D."/>
        </authorList>
    </citation>
    <scope>GENOME REANNOTATION</scope>
    <source>
        <strain>cv. Columbia</strain>
    </source>
</reference>
<reference key="5">
    <citation type="journal article" date="2003" name="Science">
        <title>Empirical analysis of transcriptional activity in the Arabidopsis genome.</title>
        <authorList>
            <person name="Yamada K."/>
            <person name="Lim J."/>
            <person name="Dale J.M."/>
            <person name="Chen H."/>
            <person name="Shinn P."/>
            <person name="Palm C.J."/>
            <person name="Southwick A.M."/>
            <person name="Wu H.C."/>
            <person name="Kim C.J."/>
            <person name="Nguyen M."/>
            <person name="Pham P.K."/>
            <person name="Cheuk R.F."/>
            <person name="Karlin-Newmann G."/>
            <person name="Liu S.X."/>
            <person name="Lam B."/>
            <person name="Sakano H."/>
            <person name="Wu T."/>
            <person name="Yu G."/>
            <person name="Miranda M."/>
            <person name="Quach H.L."/>
            <person name="Tripp M."/>
            <person name="Chang C.H."/>
            <person name="Lee J.M."/>
            <person name="Toriumi M.J."/>
            <person name="Chan M.M."/>
            <person name="Tang C.C."/>
            <person name="Onodera C.S."/>
            <person name="Deng J.M."/>
            <person name="Akiyama K."/>
            <person name="Ansari Y."/>
            <person name="Arakawa T."/>
            <person name="Banh J."/>
            <person name="Banno F."/>
            <person name="Bowser L."/>
            <person name="Brooks S.Y."/>
            <person name="Carninci P."/>
            <person name="Chao Q."/>
            <person name="Choy N."/>
            <person name="Enju A."/>
            <person name="Goldsmith A.D."/>
            <person name="Gurjal M."/>
            <person name="Hansen N.F."/>
            <person name="Hayashizaki Y."/>
            <person name="Johnson-Hopson C."/>
            <person name="Hsuan V.W."/>
            <person name="Iida K."/>
            <person name="Karnes M."/>
            <person name="Khan S."/>
            <person name="Koesema E."/>
            <person name="Ishida J."/>
            <person name="Jiang P.X."/>
            <person name="Jones T."/>
            <person name="Kawai J."/>
            <person name="Kamiya A."/>
            <person name="Meyers C."/>
            <person name="Nakajima M."/>
            <person name="Narusaka M."/>
            <person name="Seki M."/>
            <person name="Sakurai T."/>
            <person name="Satou M."/>
            <person name="Tamse R."/>
            <person name="Vaysberg M."/>
            <person name="Wallender E.K."/>
            <person name="Wong C."/>
            <person name="Yamamura Y."/>
            <person name="Yuan S."/>
            <person name="Shinozaki K."/>
            <person name="Davis R.W."/>
            <person name="Theologis A."/>
            <person name="Ecker J.R."/>
        </authorList>
    </citation>
    <scope>NUCLEOTIDE SEQUENCE [LARGE SCALE MRNA]</scope>
    <source>
        <strain>cv. Columbia</strain>
    </source>
</reference>
<reference key="6">
    <citation type="journal article" date="2013" name="Front. Plant Sci.">
        <title>Rapid phosphatidic acid accumulation in response to low temperature stress in Arabidopsis is generated through diacylglycerol kinase.</title>
        <authorList>
            <person name="Arisz S.A."/>
            <person name="van Wijk R."/>
            <person name="Roels W."/>
            <person name="Zhu J.K."/>
            <person name="Haring M.A."/>
            <person name="Munnik T."/>
        </authorList>
    </citation>
    <scope>FUNCTION</scope>
</reference>
<dbReference type="EC" id="2.7.1.107"/>
<dbReference type="EMBL" id="AY686593">
    <property type="protein sequence ID" value="AAU04880.1"/>
    <property type="status" value="ALT_SEQ"/>
    <property type="molecule type" value="mRNA"/>
</dbReference>
<dbReference type="EMBL" id="DQ350135">
    <property type="protein sequence ID" value="ABC71078.1"/>
    <property type="molecule type" value="mRNA"/>
</dbReference>
<dbReference type="EMBL" id="AL161576">
    <property type="protein sequence ID" value="CAB81027.1"/>
    <property type="status" value="ALT_SEQ"/>
    <property type="molecule type" value="Genomic_DNA"/>
</dbReference>
<dbReference type="EMBL" id="CP002687">
    <property type="protein sequence ID" value="AEE85754.1"/>
    <property type="molecule type" value="Genomic_DNA"/>
</dbReference>
<dbReference type="EMBL" id="AF360174">
    <property type="protein sequence ID" value="AAK25884.1"/>
    <property type="status" value="ALT_SEQ"/>
    <property type="molecule type" value="mRNA"/>
</dbReference>
<dbReference type="EMBL" id="AY113915">
    <property type="protein sequence ID" value="AAM44963.1"/>
    <property type="status" value="ALT_SEQ"/>
    <property type="molecule type" value="mRNA"/>
</dbReference>
<dbReference type="PIR" id="G85354">
    <property type="entry name" value="G85354"/>
</dbReference>
<dbReference type="RefSeq" id="NP_001328552.1">
    <property type="nucleotide sequence ID" value="NM_001342006.1"/>
</dbReference>
<dbReference type="RefSeq" id="NP_567845.4">
    <property type="nucleotide sequence ID" value="NM_119180.6"/>
</dbReference>
<dbReference type="BioGRID" id="14444">
    <property type="interactions" value="1"/>
</dbReference>
<dbReference type="FunCoup" id="F4JQ95">
    <property type="interactions" value="101"/>
</dbReference>
<dbReference type="IntAct" id="F4JQ95">
    <property type="interactions" value="1"/>
</dbReference>
<dbReference type="STRING" id="3702.F4JQ95"/>
<dbReference type="iPTMnet" id="F4JQ95"/>
<dbReference type="PaxDb" id="3702-AT4G30340.1"/>
<dbReference type="ProteomicsDB" id="224102"/>
<dbReference type="EnsemblPlants" id="AT4G30340.1">
    <property type="protein sequence ID" value="AT4G30340.1"/>
    <property type="gene ID" value="AT4G30340"/>
</dbReference>
<dbReference type="GeneID" id="829157"/>
<dbReference type="Gramene" id="AT4G30340.1">
    <property type="protein sequence ID" value="AT4G30340.1"/>
    <property type="gene ID" value="AT4G30340"/>
</dbReference>
<dbReference type="KEGG" id="ath:AT4G30340"/>
<dbReference type="Araport" id="AT4G30340"/>
<dbReference type="TAIR" id="AT4G30340">
    <property type="gene designation" value="DGK7"/>
</dbReference>
<dbReference type="eggNOG" id="KOG1169">
    <property type="taxonomic scope" value="Eukaryota"/>
</dbReference>
<dbReference type="HOGENOM" id="CLU_002706_46_3_1"/>
<dbReference type="InParanoid" id="F4JQ95"/>
<dbReference type="OMA" id="CGVWGKE"/>
<dbReference type="OrthoDB" id="242257at2759"/>
<dbReference type="BioCyc" id="MetaCyc:AT4G30340-MONOMER"/>
<dbReference type="PRO" id="PR:F4JQ95"/>
<dbReference type="Proteomes" id="UP000006548">
    <property type="component" value="Chromosome 4"/>
</dbReference>
<dbReference type="ExpressionAtlas" id="F4JQ95">
    <property type="expression patterns" value="baseline and differential"/>
</dbReference>
<dbReference type="GO" id="GO:0005524">
    <property type="term" value="F:ATP binding"/>
    <property type="evidence" value="ECO:0007669"/>
    <property type="project" value="UniProtKB-KW"/>
</dbReference>
<dbReference type="GO" id="GO:0004143">
    <property type="term" value="F:ATP-dependent diacylglycerol kinase activity"/>
    <property type="evidence" value="ECO:0000314"/>
    <property type="project" value="TAIR"/>
</dbReference>
<dbReference type="GO" id="GO:0006952">
    <property type="term" value="P:defense response"/>
    <property type="evidence" value="ECO:0007669"/>
    <property type="project" value="UniProtKB-KW"/>
</dbReference>
<dbReference type="GO" id="GO:0048366">
    <property type="term" value="P:leaf development"/>
    <property type="evidence" value="ECO:0000315"/>
    <property type="project" value="TAIR"/>
</dbReference>
<dbReference type="GO" id="GO:0007200">
    <property type="term" value="P:phospholipase C-activating G protein-coupled receptor signaling pathway"/>
    <property type="evidence" value="ECO:0007669"/>
    <property type="project" value="InterPro"/>
</dbReference>
<dbReference type="GO" id="GO:0048364">
    <property type="term" value="P:root development"/>
    <property type="evidence" value="ECO:0000315"/>
    <property type="project" value="TAIR"/>
</dbReference>
<dbReference type="FunFam" id="2.60.200.40:FF:000011">
    <property type="entry name" value="diacylglycerol kinase"/>
    <property type="match status" value="1"/>
</dbReference>
<dbReference type="FunFam" id="3.40.50.10330:FF:000023">
    <property type="entry name" value="diacylglycerol kinase"/>
    <property type="match status" value="1"/>
</dbReference>
<dbReference type="Gene3D" id="2.60.200.40">
    <property type="match status" value="1"/>
</dbReference>
<dbReference type="Gene3D" id="3.40.50.10330">
    <property type="entry name" value="Probable inorganic polyphosphate/atp-NAD kinase, domain 1"/>
    <property type="match status" value="1"/>
</dbReference>
<dbReference type="InterPro" id="IPR017438">
    <property type="entry name" value="ATP-NAD_kinase_N"/>
</dbReference>
<dbReference type="InterPro" id="IPR037607">
    <property type="entry name" value="DGK"/>
</dbReference>
<dbReference type="InterPro" id="IPR000756">
    <property type="entry name" value="Diacylglycerol_kin_accessory"/>
</dbReference>
<dbReference type="InterPro" id="IPR001206">
    <property type="entry name" value="Diacylglycerol_kinase_cat_dom"/>
</dbReference>
<dbReference type="InterPro" id="IPR016961">
    <property type="entry name" value="Diacylglycerol_kinase_pln"/>
</dbReference>
<dbReference type="InterPro" id="IPR016064">
    <property type="entry name" value="NAD/diacylglycerol_kinase_sf"/>
</dbReference>
<dbReference type="PANTHER" id="PTHR11255">
    <property type="entry name" value="DIACYLGLYCEROL KINASE"/>
    <property type="match status" value="1"/>
</dbReference>
<dbReference type="PANTHER" id="PTHR11255:SF115">
    <property type="entry name" value="DIACYLGLYCEROL KINASE 7"/>
    <property type="match status" value="1"/>
</dbReference>
<dbReference type="Pfam" id="PF00609">
    <property type="entry name" value="DAGK_acc"/>
    <property type="match status" value="1"/>
</dbReference>
<dbReference type="Pfam" id="PF00781">
    <property type="entry name" value="DAGK_cat"/>
    <property type="match status" value="1"/>
</dbReference>
<dbReference type="PIRSF" id="PIRSF030829">
    <property type="entry name" value="Diacylglycerol_kinase_pln"/>
    <property type="match status" value="1"/>
</dbReference>
<dbReference type="SMART" id="SM00045">
    <property type="entry name" value="DAGKa"/>
    <property type="match status" value="1"/>
</dbReference>
<dbReference type="SMART" id="SM00046">
    <property type="entry name" value="DAGKc"/>
    <property type="match status" value="1"/>
</dbReference>
<dbReference type="SUPFAM" id="SSF111331">
    <property type="entry name" value="NAD kinase/diacylglycerol kinase-like"/>
    <property type="match status" value="1"/>
</dbReference>
<dbReference type="PROSITE" id="PS50146">
    <property type="entry name" value="DAGK"/>
    <property type="match status" value="1"/>
</dbReference>
<accession>F4JQ95</accession>
<accession>B0KYU1</accession>
<accession>Q9C5L2</accession>
<accession>Q9M0C6</accession>